<accession>P86617</accession>
<name>PLS4_PHAJA</name>
<feature type="peptide" id="PRO_0000404623" description="Phylloseptin-J4" evidence="1 5">
    <location>
        <begin position="1"/>
        <end position="19"/>
    </location>
</feature>
<feature type="modified residue" description="Leucine amide" evidence="3">
    <location>
        <position position="19"/>
    </location>
</feature>
<feature type="unsure residue" description="L or I" evidence="3">
    <location>
        <position position="2"/>
    </location>
</feature>
<feature type="unsure residue" description="L or I" evidence="3">
    <location>
        <position position="4"/>
    </location>
</feature>
<feature type="unsure residue" description="I or L" evidence="3">
    <location>
        <position position="5"/>
    </location>
</feature>
<feature type="unsure residue" description="I or L" evidence="3">
    <location>
        <position position="9"/>
    </location>
</feature>
<feature type="unsure residue" description="I or L" evidence="3">
    <location>
        <position position="12"/>
    </location>
</feature>
<feature type="unsure residue" description="I or L" evidence="3">
    <location>
        <position position="15"/>
    </location>
</feature>
<feature type="unsure residue" description="L or I" evidence="3">
    <location>
        <position position="19"/>
    </location>
</feature>
<evidence type="ECO:0000250" key="1">
    <source>
        <dbReference type="UniProtKB" id="P84572"/>
    </source>
</evidence>
<evidence type="ECO:0000255" key="2"/>
<evidence type="ECO:0000269" key="3">
    <source>
    </source>
</evidence>
<evidence type="ECO:0000303" key="4">
    <source>
    </source>
</evidence>
<evidence type="ECO:0000305" key="5"/>
<reference evidence="5" key="1">
    <citation type="journal article" date="2011" name="Toxicon">
        <title>Peptidomic dissection of the skin secretion of Phasmahyla jandaia (Bokermann and Sazima, 1978) (Anura, Hylidae, Phyllomedusinae).</title>
        <authorList>
            <person name="Rates B."/>
            <person name="Silva L.P."/>
            <person name="Ireno I.C."/>
            <person name="Leite F.S."/>
            <person name="Borges M.H."/>
            <person name="Bloch C. Jr."/>
            <person name="De Lima M.E."/>
            <person name="Pimenta A.M."/>
        </authorList>
    </citation>
    <scope>PROTEIN SEQUENCE</scope>
    <scope>SUBCELLULAR LOCATION</scope>
    <scope>TISSUE SPECIFICITY</scope>
    <scope>MASS SPECTROMETRY</scope>
    <scope>AMIDATION AT LEU-19</scope>
    <source>
        <tissue evidence="3">Skin secretion</tissue>
    </source>
</reference>
<sequence length="19" mass="2038">FLSLIPHAINAISAIAHHL</sequence>
<organism>
    <name type="scientific">Phasmahyla jandaia</name>
    <name type="common">Jandaia leaf frog</name>
    <name type="synonym">Phyllomedusa jandaia</name>
    <dbReference type="NCBI Taxonomy" id="762504"/>
    <lineage>
        <taxon>Eukaryota</taxon>
        <taxon>Metazoa</taxon>
        <taxon>Chordata</taxon>
        <taxon>Craniata</taxon>
        <taxon>Vertebrata</taxon>
        <taxon>Euteleostomi</taxon>
        <taxon>Amphibia</taxon>
        <taxon>Batrachia</taxon>
        <taxon>Anura</taxon>
        <taxon>Neobatrachia</taxon>
        <taxon>Hyloidea</taxon>
        <taxon>Hylidae</taxon>
        <taxon>Phyllomedusinae</taxon>
        <taxon>Phasmahyla</taxon>
    </lineage>
</organism>
<proteinExistence type="evidence at protein level"/>
<dbReference type="GO" id="GO:0005576">
    <property type="term" value="C:extracellular region"/>
    <property type="evidence" value="ECO:0007669"/>
    <property type="project" value="UniProtKB-SubCell"/>
</dbReference>
<dbReference type="GO" id="GO:0006952">
    <property type="term" value="P:defense response"/>
    <property type="evidence" value="ECO:0007669"/>
    <property type="project" value="UniProtKB-KW"/>
</dbReference>
<protein>
    <recommendedName>
        <fullName evidence="4">Phylloseptin-J4</fullName>
        <shortName evidence="4">PLS-J4</shortName>
        <shortName>PS-J4</shortName>
    </recommendedName>
</protein>
<keyword id="KW-0027">Amidation</keyword>
<keyword id="KW-0878">Amphibian defense peptide</keyword>
<keyword id="KW-0929">Antimicrobial</keyword>
<keyword id="KW-0903">Direct protein sequencing</keyword>
<keyword id="KW-0964">Secreted</keyword>
<comment type="function">
    <text evidence="1">Has antimicrobial activity.</text>
</comment>
<comment type="subcellular location">
    <subcellularLocation>
        <location evidence="3">Secreted</location>
    </subcellularLocation>
</comment>
<comment type="tissue specificity">
    <text evidence="3">Expressed by the skin glands.</text>
</comment>
<comment type="mass spectrometry" mass="2036.1" method="MALDI" evidence="3"/>
<comment type="similarity">
    <text evidence="2">Belongs to the frog skin active peptide (FSAP) family. Phylloseptin subfamily.</text>
</comment>